<reference key="1">
    <citation type="journal article" date="1989" name="Virology">
        <title>Biological and molecular characterization of human immunodeficiency virus (HIV-1BR) from the brain of a patient with progressive dementia.</title>
        <authorList>
            <person name="Anand R."/>
            <person name="Thayer R."/>
            <person name="Srinivasan A."/>
            <person name="Nayyar S."/>
            <person name="Gardner M."/>
            <person name="Luciw P."/>
            <person name="Dandekar S."/>
        </authorList>
    </citation>
    <scope>NUCLEOTIDE SEQUENCE [GENOMIC RNA]</scope>
</reference>
<keyword id="KW-0014">AIDS</keyword>
<keyword id="KW-0053">Apoptosis</keyword>
<keyword id="KW-0244">Early protein</keyword>
<keyword id="KW-1032">Host cell membrane</keyword>
<keyword id="KW-1040">Host Golgi apparatus</keyword>
<keyword id="KW-1043">Host membrane</keyword>
<keyword id="KW-0945">Host-virus interaction</keyword>
<keyword id="KW-1080">Inhibition of host adaptive immune response by virus</keyword>
<keyword id="KW-1083">Inhibition of host autophagy by virus</keyword>
<keyword id="KW-1115">Inhibition of host MHC class I molecule presentation by virus</keyword>
<keyword id="KW-1116">Inhibition of host MHC class II molecule presentation by virus</keyword>
<keyword id="KW-0449">Lipoprotein</keyword>
<keyword id="KW-0472">Membrane</keyword>
<keyword id="KW-0519">Myristate</keyword>
<keyword id="KW-0597">Phosphoprotein</keyword>
<keyword id="KW-0964">Secreted</keyword>
<keyword id="KW-0729">SH3-binding</keyword>
<keyword id="KW-0899">Viral immunoevasion</keyword>
<keyword id="KW-0946">Virion</keyword>
<keyword id="KW-0843">Virulence</keyword>
<sequence>MGGKWSKMAGWSTVRERMRRAEPARERMRRAEPRAEPAADGVGAVSRDLEKHGAITSSNTAATNADCAWLEAQEDEEVGFPVKPQVPLRPMTYKAAVDLSHFLKEKGGLEGLIHSQQRQDILDLWVYHTQGYFPDWQNYTPGPGVRYPLTFGWCFKLVPVEPEKIEEANEGENNSLLHPMSQHGMDDPEREVLQWRFDSRLAFHHMARELHPEYYKNC</sequence>
<evidence type="ECO:0000255" key="1">
    <source>
        <dbReference type="HAMAP-Rule" id="MF_04078"/>
    </source>
</evidence>
<evidence type="ECO:0000256" key="2">
    <source>
        <dbReference type="SAM" id="MobiDB-lite"/>
    </source>
</evidence>
<organismHost>
    <name type="scientific">Homo sapiens</name>
    <name type="common">Human</name>
    <dbReference type="NCBI Taxonomy" id="9606"/>
</organismHost>
<protein>
    <recommendedName>
        <fullName evidence="1">Protein Nef</fullName>
    </recommendedName>
    <alternativeName>
        <fullName evidence="1">3'ORF</fullName>
    </alternativeName>
    <alternativeName>
        <fullName evidence="1">Negative factor</fullName>
        <shortName evidence="1">F-protein</shortName>
    </alternativeName>
    <component>
        <recommendedName>
            <fullName evidence="1">C-terminal core protein</fullName>
        </recommendedName>
    </component>
</protein>
<name>NEF_HV1BN</name>
<proteinExistence type="inferred from homology"/>
<dbReference type="EMBL" id="M21098">
    <property type="protein sequence ID" value="AAA44222.1"/>
    <property type="molecule type" value="Genomic_RNA"/>
</dbReference>
<dbReference type="PIR" id="D31667">
    <property type="entry name" value="ASLJBR"/>
</dbReference>
<dbReference type="SMR" id="P12479"/>
<dbReference type="GO" id="GO:0005576">
    <property type="term" value="C:extracellular region"/>
    <property type="evidence" value="ECO:0007669"/>
    <property type="project" value="UniProtKB-SubCell"/>
</dbReference>
<dbReference type="GO" id="GO:0044178">
    <property type="term" value="C:host cell Golgi membrane"/>
    <property type="evidence" value="ECO:0007669"/>
    <property type="project" value="UniProtKB-SubCell"/>
</dbReference>
<dbReference type="GO" id="GO:0020002">
    <property type="term" value="C:host cell plasma membrane"/>
    <property type="evidence" value="ECO:0007669"/>
    <property type="project" value="UniProtKB-SubCell"/>
</dbReference>
<dbReference type="GO" id="GO:0016020">
    <property type="term" value="C:membrane"/>
    <property type="evidence" value="ECO:0007669"/>
    <property type="project" value="UniProtKB-UniRule"/>
</dbReference>
<dbReference type="GO" id="GO:0044423">
    <property type="term" value="C:virion component"/>
    <property type="evidence" value="ECO:0007669"/>
    <property type="project" value="UniProtKB-UniRule"/>
</dbReference>
<dbReference type="GO" id="GO:0005525">
    <property type="term" value="F:GTP binding"/>
    <property type="evidence" value="ECO:0007669"/>
    <property type="project" value="UniProtKB-UniRule"/>
</dbReference>
<dbReference type="GO" id="GO:0017124">
    <property type="term" value="F:SH3 domain binding"/>
    <property type="evidence" value="ECO:0007669"/>
    <property type="project" value="UniProtKB-UniRule"/>
</dbReference>
<dbReference type="GO" id="GO:0046776">
    <property type="term" value="P:symbiont-mediated suppression of host antigen processing and presentation of peptide antigen via MHC class I"/>
    <property type="evidence" value="ECO:0007669"/>
    <property type="project" value="UniProtKB-UniRule"/>
</dbReference>
<dbReference type="GO" id="GO:0039505">
    <property type="term" value="P:symbiont-mediated suppression of host antigen processing and presentation of peptide antigen via MHC class II"/>
    <property type="evidence" value="ECO:0007669"/>
    <property type="project" value="UniProtKB-UniRule"/>
</dbReference>
<dbReference type="GO" id="GO:0140321">
    <property type="term" value="P:symbiont-mediated suppression of host autophagy"/>
    <property type="evidence" value="ECO:0007669"/>
    <property type="project" value="UniProtKB-KW"/>
</dbReference>
<dbReference type="FunFam" id="3.30.62.10:FF:000001">
    <property type="entry name" value="Protein Nef"/>
    <property type="match status" value="1"/>
</dbReference>
<dbReference type="Gene3D" id="4.10.890.10">
    <property type="entry name" value="HIV 1 nef anchor domain"/>
    <property type="match status" value="2"/>
</dbReference>
<dbReference type="Gene3D" id="3.30.62.10">
    <property type="entry name" value="Nef Regulatory Factor"/>
    <property type="match status" value="1"/>
</dbReference>
<dbReference type="HAMAP" id="MF_04078">
    <property type="entry name" value="NEF_HIV"/>
    <property type="match status" value="1"/>
</dbReference>
<dbReference type="InterPro" id="IPR027480">
    <property type="entry name" value="HIV-1_Nef_anchor_sf"/>
</dbReference>
<dbReference type="InterPro" id="IPR027481">
    <property type="entry name" value="HIV-1_Nef_core_sf"/>
</dbReference>
<dbReference type="InterPro" id="IPR001558">
    <property type="entry name" value="HIV_Nef"/>
</dbReference>
<dbReference type="Pfam" id="PF00469">
    <property type="entry name" value="F-protein"/>
    <property type="match status" value="1"/>
</dbReference>
<dbReference type="SUPFAM" id="SSF55671">
    <property type="entry name" value="Regulatory factor Nef"/>
    <property type="match status" value="1"/>
</dbReference>
<gene>
    <name evidence="1" type="primary">nef</name>
</gene>
<feature type="initiator methionine" description="Removed; by host" evidence="1">
    <location>
        <position position="1"/>
    </location>
</feature>
<feature type="chain" id="PRO_0000038347" description="Protein Nef" evidence="1">
    <location>
        <begin position="2"/>
        <end position="218"/>
    </location>
</feature>
<feature type="chain" id="PRO_0000038348" description="C-terminal core protein" evidence="1">
    <location>
        <begin position="70"/>
        <end position="218"/>
    </location>
</feature>
<feature type="region of interest" description="Disordered" evidence="2">
    <location>
        <begin position="1"/>
        <end position="44"/>
    </location>
</feature>
<feature type="region of interest" description="Acidic; interacts with host PACS1 and PACS2; stabilizes the interaction of NEF/MHC-I with host AP1M1; necessary for MHC-I internalization" evidence="1">
    <location>
        <begin position="74"/>
        <end position="77"/>
    </location>
</feature>
<feature type="region of interest" description="SH3-binding; interaction with Src family tyrosine kinases" evidence="1">
    <location>
        <begin position="81"/>
        <end position="90"/>
    </location>
</feature>
<feature type="region of interest" description="Mediates dimerization, Nef-PTE1 interaction" evidence="1">
    <location>
        <begin position="120"/>
        <end position="136"/>
    </location>
</feature>
<feature type="region of interest" description="Binding to ATP6V1H" evidence="1">
    <location>
        <begin position="160"/>
        <end position="192"/>
    </location>
</feature>
<feature type="short sequence motif" description="PxxP; stabilizes the interaction of NEF/MHC-I with host AP1M1; necessary for MHC-I internalization" evidence="1">
    <location>
        <begin position="84"/>
        <end position="87"/>
    </location>
</feature>
<feature type="short sequence motif" description="Dileucine internalization motif; necessary for CD4 internalization" evidence="1">
    <location>
        <begin position="176"/>
        <end position="177"/>
    </location>
</feature>
<feature type="short sequence motif" description="Diacidic; necessary for CD4 internalization" evidence="1">
    <location>
        <begin position="186"/>
        <end position="187"/>
    </location>
</feature>
<feature type="compositionally biased region" description="Basic and acidic residues" evidence="2">
    <location>
        <begin position="14"/>
        <end position="37"/>
    </location>
</feature>
<feature type="site" description="Might play a role in AP-1 recruitment to the Nef-MHC-I complex" evidence="1">
    <location>
        <position position="18"/>
    </location>
</feature>
<feature type="site" description="Cleavage; by viral protease" evidence="1">
    <location>
        <begin position="69"/>
        <end position="70"/>
    </location>
</feature>
<feature type="modified residue" description="Phosphoserine; by host" evidence="1">
    <location>
        <position position="6"/>
    </location>
</feature>
<feature type="lipid moiety-binding region" description="N-myristoyl glycine; by host" evidence="1">
    <location>
        <position position="2"/>
    </location>
</feature>
<organism>
    <name type="scientific">Human immunodeficiency virus type 1 group M subtype B (isolate BRVA)</name>
    <name type="common">HIV-1</name>
    <dbReference type="NCBI Taxonomy" id="11693"/>
    <lineage>
        <taxon>Viruses</taxon>
        <taxon>Riboviria</taxon>
        <taxon>Pararnavirae</taxon>
        <taxon>Artverviricota</taxon>
        <taxon>Revtraviricetes</taxon>
        <taxon>Ortervirales</taxon>
        <taxon>Retroviridae</taxon>
        <taxon>Orthoretrovirinae</taxon>
        <taxon>Lentivirus</taxon>
        <taxon>Human immunodeficiency virus type 1</taxon>
    </lineage>
</organism>
<accession>P12479</accession>
<comment type="function">
    <text evidence="1">Factor of infectivity and pathogenicity, required for optimal virus replication. Alters numerous pathways of T-lymphocyte function and down-regulates immunity surface molecules in order to evade host defense and increase viral infectivity. Alters the functionality of other immunity cells, like dendritic cells, monocytes/macrophages and NK cells.</text>
</comment>
<comment type="function">
    <text evidence="1">In infected CD4(+) T-lymphocytes, down-regulates the surface MHC-I, mature MHC-II, CD4, CD28, CCR5 and CXCR4 molecules. Mediates internalization and degradation of host CD4 through the interaction of with the cytoplasmic tail of CD4, the recruitment of AP-2 (clathrin adapter protein complex 2), internalization through clathrin coated pits, and subsequent transport to endosomes and lysosomes for degradation. Diverts host MHC-I molecules to the trans-Golgi network-associated endosomal compartments by an endocytic pathway to finally target them for degradation. MHC-I down-regulation may involve AP-1 (clathrin adapter protein complex 1) or possibly Src family kinase-ZAP70/Syk-PI3K cascade recruited by PACS2. In consequence infected cells are masked for immune recognition by cytotoxic T-lymphocytes. Decreasing the number of immune receptors also prevents reinfection by more HIV particles (superinfection). Down-regulates host SERINC3 and SERINC5 thereby excluding these proteins from the viral particles. Virion infectivity is drastically higher when SERINC3 or SERINC5 are excluded from the viral envelope, because these host antiviral proteins impair the membrane fusion event necessary for subsequent virion penetration.</text>
</comment>
<comment type="function">
    <text evidence="1">Bypasses host T-cell signaling by inducing a transcriptional program nearly identical to that of anti-CD3 cell activation. Interaction with TCR-zeta chain up-regulates the Fas ligand (FasL). Increasing surface FasL molecules and decreasing surface MHC-I molecules on infected CD4(+) cells send attacking cytotoxic CD8+ T-lymphocytes into apoptosis.</text>
</comment>
<comment type="function">
    <text evidence="1">Plays a role in optimizing the host cell environment for viral replication without causing cell death by apoptosis. Protects the infected cells from apoptosis in order to keep them alive until the next virus generation is ready to strike. Inhibits the Fas and TNFR-mediated death signals by blocking MAP3K5/ASK1. Decreases the half-life of TP53, protecting the infected cell against p53-mediated apoptosis. Inhibits the apoptotic signals regulated by the Bcl-2 family proteins through the formation of a Nef/PI3-kinase/PAK2 complex that leads to activation of PAK2 and induces phosphorylation of host BAD.</text>
</comment>
<comment type="function">
    <text evidence="1">Extracellular Nef protein targets CD4(+) T-lymphocytes for apoptosis by interacting with CXCR4 surface receptors.</text>
</comment>
<comment type="subunit">
    <text evidence="1">Monomer; cytosolic form. Homodimer; membrane bound form. Interacts with Nef associated p21-activated kinase (PAK2); this interaction activates PAK2. Associates with the Nef-MHC-I-AP1 complex; this complex is required for MHC-I internalization. Interacts (via C-terminus) with host PI3-kinase. Interacts with host PACS1; this interaction seems to be weak. Interacts with host PACS2. Interacts with host LCK and MAPK3; these interactions inhibit the kinase activity of the latter. Interacts with host ATP6V1H; this interaction may play a role in CD4 endocytosis. Associates with the CD4-Nef-AP2 complex; this complex is required for CD4 internalization. Interacts with host AP2 subunit alpha and AP2 subunit sigma2. Interacts with TCR-zeta chain; this interaction up-regulates the Fas ligand (FasL) surface expression. Interacts with host HCK, LYN, and SRC; these interactions activate the Src family kinases. Interacts with MAP3K5; this interaction inhibits the Fas and TNFR-mediated death signals. Interacts with beta-COP and PTE1. Interacts with human RACK1; this increases Nef phosphorylation by PKC. Interacts with TP53; this interaction decreases the half-life of TP53, protecting the infected cell against p53-mediated apoptosis.</text>
</comment>
<comment type="subcellular location">
    <subcellularLocation>
        <location evidence="1">Host cell membrane</location>
        <topology evidence="1">Lipid-anchor</topology>
        <orientation evidence="1">Cytoplasmic side</orientation>
    </subcellularLocation>
    <subcellularLocation>
        <location evidence="1">Virion</location>
    </subcellularLocation>
    <subcellularLocation>
        <location evidence="1">Secreted</location>
    </subcellularLocation>
    <subcellularLocation>
        <location evidence="1">Host Golgi apparatus membrane</location>
    </subcellularLocation>
    <text evidence="1">TGN localization requires PACS1. Associates with the inner plasma membrane through its N-terminal domain. Nef stimulates its own export via the release of exosomes. Incorporated in virions at a rate of about 10 molecules per virion, where it is cleaved.</text>
</comment>
<comment type="induction">
    <text evidence="1">Expressed early in the viral replication cycle.</text>
</comment>
<comment type="domain">
    <text evidence="1">The N-terminal domain is composed of the N-myristoyl glycine and of a cluster of positively charged amino acids. It is required for inner plasma membrane targeting of Nef and virion incorporation, and thereby for infectivity. This domain is also involved in binding to TP53.</text>
</comment>
<comment type="domain">
    <text evidence="1">The SH3-binding domain constituted of PxxP motifs mediates binding to several Src family proteins thereby regulating their tyrosine kinase activity. The same motifs also mediates the association with MAPK3, PI3-kinase and TCR-zeta.</text>
</comment>
<comment type="domain">
    <text evidence="1">The dileucine internalization motif and a diacidic motif seem to be required for binding to AP-2.</text>
</comment>
<comment type="domain">
    <text evidence="1">The acidic region binds to the sorting protein PACS-2, which targets Nef to the paranuclear region, enabling the PxxP motif to direct assembly of an SFK/ZAP-70/PI3K complex that accelerates endocytosis of cell-surface MHC-I.</text>
</comment>
<comment type="PTM">
    <text evidence="1">The virion-associated Nef proteins are cleaved by the viral protease to release the soluble C-terminal core protein. Nef is probably cleaved concomitantly with viral structural proteins on maturation of virus particles.</text>
</comment>
<comment type="PTM">
    <text evidence="1">Myristoylated.</text>
</comment>
<comment type="PTM">
    <text evidence="1">Phosphorylated on serine residues, probably by host PKCdelta and theta.</text>
</comment>
<comment type="miscellaneous">
    <text evidence="1">HIV-1 lineages are divided in three main groups, M (for Major), O (for Outlier), and N (for New, or Non-M, Non-O). The vast majority of strains found worldwide belong to the group M. Group O seems to be endemic to and largely confined to Cameroon and neighboring countries in West Central Africa, where these viruses represent a small minority of HIV-1 strains. The group N is represented by a limited number of isolates from Cameroonian persons. The group M is further subdivided in 9 clades or subtypes (A to D, F to H, J and K).</text>
</comment>
<comment type="similarity">
    <text evidence="1">Belongs to the lentivirus primate group Nef protein family.</text>
</comment>